<reference key="1">
    <citation type="journal article" date="2000" name="Nucleic Acids Res.">
        <title>Complete genome sequence of the alkaliphilic bacterium Bacillus halodurans and genomic sequence comparison with Bacillus subtilis.</title>
        <authorList>
            <person name="Takami H."/>
            <person name="Nakasone K."/>
            <person name="Takaki Y."/>
            <person name="Maeno G."/>
            <person name="Sasaki R."/>
            <person name="Masui N."/>
            <person name="Fuji F."/>
            <person name="Hirama C."/>
            <person name="Nakamura Y."/>
            <person name="Ogasawara N."/>
            <person name="Kuhara S."/>
            <person name="Horikoshi K."/>
        </authorList>
    </citation>
    <scope>NUCLEOTIDE SEQUENCE [LARGE SCALE GENOMIC DNA]</scope>
    <source>
        <strain>ATCC BAA-125 / DSM 18197 / FERM 7344 / JCM 9153 / C-125</strain>
    </source>
</reference>
<accession>Q9KAD6</accession>
<feature type="chain" id="PRO_0000094960" description="UPF0291 protein BH2353">
    <location>
        <begin position="1"/>
        <end position="79"/>
    </location>
</feature>
<feature type="region of interest" description="Disordered" evidence="2">
    <location>
        <begin position="57"/>
        <end position="79"/>
    </location>
</feature>
<feature type="compositionally biased region" description="Basic and acidic residues" evidence="2">
    <location>
        <begin position="63"/>
        <end position="79"/>
    </location>
</feature>
<organism>
    <name type="scientific">Halalkalibacterium halodurans (strain ATCC BAA-125 / DSM 18197 / FERM 7344 / JCM 9153 / C-125)</name>
    <name type="common">Bacillus halodurans</name>
    <dbReference type="NCBI Taxonomy" id="272558"/>
    <lineage>
        <taxon>Bacteria</taxon>
        <taxon>Bacillati</taxon>
        <taxon>Bacillota</taxon>
        <taxon>Bacilli</taxon>
        <taxon>Bacillales</taxon>
        <taxon>Bacillaceae</taxon>
        <taxon>Halalkalibacterium (ex Joshi et al. 2022)</taxon>
    </lineage>
</organism>
<keyword id="KW-0963">Cytoplasm</keyword>
<keyword id="KW-1185">Reference proteome</keyword>
<comment type="subcellular location">
    <subcellularLocation>
        <location evidence="1">Cytoplasm</location>
    </subcellularLocation>
</comment>
<comment type="similarity">
    <text evidence="1">Belongs to the UPF0291 family.</text>
</comment>
<proteinExistence type="inferred from homology"/>
<name>Y2353_HALH5</name>
<protein>
    <recommendedName>
        <fullName evidence="1">UPF0291 protein BH2353</fullName>
    </recommendedName>
</protein>
<evidence type="ECO:0000255" key="1">
    <source>
        <dbReference type="HAMAP-Rule" id="MF_01103"/>
    </source>
</evidence>
<evidence type="ECO:0000256" key="2">
    <source>
        <dbReference type="SAM" id="MobiDB-lite"/>
    </source>
</evidence>
<gene>
    <name type="ordered locus">BH2353</name>
</gene>
<sequence>MLSKQKIERINELAKRAKTTGLTEDELREQKKLREEYIQQFRQSFKNQLHSVTVVDGAGNDVTPDKLKQSKNKYRNDIH</sequence>
<dbReference type="EMBL" id="BA000004">
    <property type="protein sequence ID" value="BAB06072.1"/>
    <property type="molecule type" value="Genomic_DNA"/>
</dbReference>
<dbReference type="PIR" id="A83944">
    <property type="entry name" value="A83944"/>
</dbReference>
<dbReference type="RefSeq" id="WP_010898507.1">
    <property type="nucleotide sequence ID" value="NC_002570.2"/>
</dbReference>
<dbReference type="SMR" id="Q9KAD6"/>
<dbReference type="STRING" id="272558.gene:10728251"/>
<dbReference type="KEGG" id="bha:BH2353"/>
<dbReference type="eggNOG" id="COG4224">
    <property type="taxonomic scope" value="Bacteria"/>
</dbReference>
<dbReference type="HOGENOM" id="CLU_173137_0_2_9"/>
<dbReference type="OrthoDB" id="390105at2"/>
<dbReference type="Proteomes" id="UP000001258">
    <property type="component" value="Chromosome"/>
</dbReference>
<dbReference type="GO" id="GO:0005737">
    <property type="term" value="C:cytoplasm"/>
    <property type="evidence" value="ECO:0007669"/>
    <property type="project" value="UniProtKB-SubCell"/>
</dbReference>
<dbReference type="Gene3D" id="1.10.287.540">
    <property type="entry name" value="Helix hairpin bin"/>
    <property type="match status" value="1"/>
</dbReference>
<dbReference type="HAMAP" id="MF_01103">
    <property type="entry name" value="UPF0291"/>
    <property type="match status" value="1"/>
</dbReference>
<dbReference type="InterPro" id="IPR009242">
    <property type="entry name" value="DUF896"/>
</dbReference>
<dbReference type="PANTHER" id="PTHR37300">
    <property type="entry name" value="UPF0291 PROTEIN CBO2609/CLC_2481"/>
    <property type="match status" value="1"/>
</dbReference>
<dbReference type="PANTHER" id="PTHR37300:SF1">
    <property type="entry name" value="UPF0291 PROTEIN YNZC"/>
    <property type="match status" value="1"/>
</dbReference>
<dbReference type="Pfam" id="PF05979">
    <property type="entry name" value="DUF896"/>
    <property type="match status" value="1"/>
</dbReference>
<dbReference type="SUPFAM" id="SSF158221">
    <property type="entry name" value="YnzC-like"/>
    <property type="match status" value="1"/>
</dbReference>